<sequence length="253" mass="27817">MMLLQLNNVSVGTRLASFSSQVTTGLQIHLIGPNGAGKSTLLASLAGLLPASGEIVLAGKSLQHYEGHELARQRAYLSQQQSALSLMPVFQYLSLYQPAGANSQAVATAISYICNKLRLTDKLPRMLSHLSGGEWQRVRLAAVFLQVWPDINPDSKLLLLDEPYSGLDVAQKVALDALLVEFCRSGRSVIISGHDLNHTLQQADEVWLLAQGQVLVQGETQQVMRADVLSQVFEVDFQIHNFNKQQWITTRSV</sequence>
<feature type="chain" id="PRO_0000091966" description="Vitamin B12 import ATP-binding protein BtuD">
    <location>
        <begin position="1"/>
        <end position="253"/>
    </location>
</feature>
<feature type="domain" description="ABC transporter" evidence="1">
    <location>
        <begin position="4"/>
        <end position="236"/>
    </location>
</feature>
<feature type="binding site" evidence="1">
    <location>
        <begin position="32"/>
        <end position="39"/>
    </location>
    <ligand>
        <name>ATP</name>
        <dbReference type="ChEBI" id="CHEBI:30616"/>
    </ligand>
</feature>
<protein>
    <recommendedName>
        <fullName evidence="1">Vitamin B12 import ATP-binding protein BtuD</fullName>
        <ecNumber evidence="1">7.6.2.8</ecNumber>
    </recommendedName>
    <alternativeName>
        <fullName evidence="1">Vitamin B12-transporting ATPase</fullName>
    </alternativeName>
</protein>
<gene>
    <name evidence="1" type="primary">btuD</name>
    <name type="ordered locus">YPTB2331</name>
</gene>
<accession>Q66A01</accession>
<reference key="1">
    <citation type="journal article" date="2004" name="Proc. Natl. Acad. Sci. U.S.A.">
        <title>Insights into the evolution of Yersinia pestis through whole-genome comparison with Yersinia pseudotuberculosis.</title>
        <authorList>
            <person name="Chain P.S.G."/>
            <person name="Carniel E."/>
            <person name="Larimer F.W."/>
            <person name="Lamerdin J."/>
            <person name="Stoutland P.O."/>
            <person name="Regala W.M."/>
            <person name="Georgescu A.M."/>
            <person name="Vergez L.M."/>
            <person name="Land M.L."/>
            <person name="Motin V.L."/>
            <person name="Brubaker R.R."/>
            <person name="Fowler J."/>
            <person name="Hinnebusch J."/>
            <person name="Marceau M."/>
            <person name="Medigue C."/>
            <person name="Simonet M."/>
            <person name="Chenal-Francisque V."/>
            <person name="Souza B."/>
            <person name="Dacheux D."/>
            <person name="Elliott J.M."/>
            <person name="Derbise A."/>
            <person name="Hauser L.J."/>
            <person name="Garcia E."/>
        </authorList>
    </citation>
    <scope>NUCLEOTIDE SEQUENCE [LARGE SCALE GENOMIC DNA]</scope>
    <source>
        <strain>IP32953</strain>
    </source>
</reference>
<evidence type="ECO:0000255" key="1">
    <source>
        <dbReference type="HAMAP-Rule" id="MF_01005"/>
    </source>
</evidence>
<proteinExistence type="inferred from homology"/>
<organism>
    <name type="scientific">Yersinia pseudotuberculosis serotype I (strain IP32953)</name>
    <dbReference type="NCBI Taxonomy" id="273123"/>
    <lineage>
        <taxon>Bacteria</taxon>
        <taxon>Pseudomonadati</taxon>
        <taxon>Pseudomonadota</taxon>
        <taxon>Gammaproteobacteria</taxon>
        <taxon>Enterobacterales</taxon>
        <taxon>Yersiniaceae</taxon>
        <taxon>Yersinia</taxon>
    </lineage>
</organism>
<dbReference type="EC" id="7.6.2.8" evidence="1"/>
<dbReference type="EMBL" id="BX936398">
    <property type="protein sequence ID" value="CAH21569.1"/>
    <property type="molecule type" value="Genomic_DNA"/>
</dbReference>
<dbReference type="SMR" id="Q66A01"/>
<dbReference type="KEGG" id="yps:YPTB2331"/>
<dbReference type="Proteomes" id="UP000001011">
    <property type="component" value="Chromosome"/>
</dbReference>
<dbReference type="GO" id="GO:0005886">
    <property type="term" value="C:plasma membrane"/>
    <property type="evidence" value="ECO:0007669"/>
    <property type="project" value="UniProtKB-SubCell"/>
</dbReference>
<dbReference type="GO" id="GO:0015420">
    <property type="term" value="F:ABC-type vitamin B12 transporter activity"/>
    <property type="evidence" value="ECO:0007669"/>
    <property type="project" value="UniProtKB-UniRule"/>
</dbReference>
<dbReference type="GO" id="GO:0005524">
    <property type="term" value="F:ATP binding"/>
    <property type="evidence" value="ECO:0007669"/>
    <property type="project" value="UniProtKB-KW"/>
</dbReference>
<dbReference type="GO" id="GO:0016887">
    <property type="term" value="F:ATP hydrolysis activity"/>
    <property type="evidence" value="ECO:0007669"/>
    <property type="project" value="InterPro"/>
</dbReference>
<dbReference type="CDD" id="cd03214">
    <property type="entry name" value="ABC_Iron-Siderophores_B12_Hemin"/>
    <property type="match status" value="1"/>
</dbReference>
<dbReference type="FunFam" id="3.40.50.300:FF:000462">
    <property type="entry name" value="Vitamin B12 import ATP-binding protein BtuD"/>
    <property type="match status" value="1"/>
</dbReference>
<dbReference type="Gene3D" id="3.40.50.300">
    <property type="entry name" value="P-loop containing nucleotide triphosphate hydrolases"/>
    <property type="match status" value="1"/>
</dbReference>
<dbReference type="HAMAP" id="MF_01005">
    <property type="entry name" value="BtuD"/>
    <property type="match status" value="1"/>
</dbReference>
<dbReference type="InterPro" id="IPR003593">
    <property type="entry name" value="AAA+_ATPase"/>
</dbReference>
<dbReference type="InterPro" id="IPR003439">
    <property type="entry name" value="ABC_transporter-like_ATP-bd"/>
</dbReference>
<dbReference type="InterPro" id="IPR017871">
    <property type="entry name" value="ABC_transporter-like_CS"/>
</dbReference>
<dbReference type="InterPro" id="IPR023693">
    <property type="entry name" value="ABC_transptr_BtuD"/>
</dbReference>
<dbReference type="InterPro" id="IPR050153">
    <property type="entry name" value="Metal_Ion_Import_ABC"/>
</dbReference>
<dbReference type="InterPro" id="IPR027417">
    <property type="entry name" value="P-loop_NTPase"/>
</dbReference>
<dbReference type="NCBIfam" id="NF002981">
    <property type="entry name" value="PRK03695.1"/>
    <property type="match status" value="1"/>
</dbReference>
<dbReference type="PANTHER" id="PTHR42734">
    <property type="entry name" value="METAL TRANSPORT SYSTEM ATP-BINDING PROTEIN TM_0124-RELATED"/>
    <property type="match status" value="1"/>
</dbReference>
<dbReference type="PANTHER" id="PTHR42734:SF18">
    <property type="entry name" value="VITAMIN B12 IMPORT ATP-BINDING PROTEIN BTUD"/>
    <property type="match status" value="1"/>
</dbReference>
<dbReference type="Pfam" id="PF00005">
    <property type="entry name" value="ABC_tran"/>
    <property type="match status" value="1"/>
</dbReference>
<dbReference type="SMART" id="SM00382">
    <property type="entry name" value="AAA"/>
    <property type="match status" value="1"/>
</dbReference>
<dbReference type="SUPFAM" id="SSF52540">
    <property type="entry name" value="P-loop containing nucleoside triphosphate hydrolases"/>
    <property type="match status" value="1"/>
</dbReference>
<dbReference type="PROSITE" id="PS00211">
    <property type="entry name" value="ABC_TRANSPORTER_1"/>
    <property type="match status" value="1"/>
</dbReference>
<dbReference type="PROSITE" id="PS50893">
    <property type="entry name" value="ABC_TRANSPORTER_2"/>
    <property type="match status" value="1"/>
</dbReference>
<name>BTUD_YERPS</name>
<keyword id="KW-0067">ATP-binding</keyword>
<keyword id="KW-0997">Cell inner membrane</keyword>
<keyword id="KW-1003">Cell membrane</keyword>
<keyword id="KW-0472">Membrane</keyword>
<keyword id="KW-0547">Nucleotide-binding</keyword>
<keyword id="KW-1278">Translocase</keyword>
<keyword id="KW-0813">Transport</keyword>
<comment type="function">
    <text evidence="1">Part of the ABC transporter complex BtuCDF involved in vitamin B12 import. Responsible for energy coupling to the transport system.</text>
</comment>
<comment type="catalytic activity">
    <reaction evidence="1">
        <text>an R-cob(III)alamin(out) + ATP + H2O = an R-cob(III)alamin(in) + ADP + phosphate + H(+)</text>
        <dbReference type="Rhea" id="RHEA:17873"/>
        <dbReference type="ChEBI" id="CHEBI:15377"/>
        <dbReference type="ChEBI" id="CHEBI:15378"/>
        <dbReference type="ChEBI" id="CHEBI:30616"/>
        <dbReference type="ChEBI" id="CHEBI:43474"/>
        <dbReference type="ChEBI" id="CHEBI:140785"/>
        <dbReference type="ChEBI" id="CHEBI:456216"/>
        <dbReference type="EC" id="7.6.2.8"/>
    </reaction>
</comment>
<comment type="subunit">
    <text evidence="1">The complex is composed of two ATP-binding proteins (BtuD), two transmembrane proteins (BtuC) and a solute-binding protein (BtuF).</text>
</comment>
<comment type="subcellular location">
    <subcellularLocation>
        <location evidence="1">Cell inner membrane</location>
        <topology evidence="1">Peripheral membrane protein</topology>
    </subcellularLocation>
</comment>
<comment type="similarity">
    <text evidence="1">Belongs to the ABC transporter superfamily. Vitamin B12 importer (TC 3.A.1.13.1) family.</text>
</comment>